<name>SKP_ECOL6</name>
<feature type="signal peptide" evidence="1">
    <location>
        <begin position="1"/>
        <end position="20"/>
    </location>
</feature>
<feature type="chain" id="PRO_0000045054" description="Chaperone protein Skp">
    <location>
        <begin position="21"/>
        <end position="161"/>
    </location>
</feature>
<feature type="region of interest" description="Lipopolysaccharide binding" evidence="2">
    <location>
        <begin position="97"/>
        <end position="108"/>
    </location>
</feature>
<dbReference type="EMBL" id="AE014075">
    <property type="protein sequence ID" value="AAN78707.1"/>
    <property type="molecule type" value="Genomic_DNA"/>
</dbReference>
<dbReference type="RefSeq" id="WP_000758956.1">
    <property type="nucleotide sequence ID" value="NZ_CP051263.1"/>
</dbReference>
<dbReference type="BMRB" id="P0AEU8"/>
<dbReference type="SMR" id="P0AEU8"/>
<dbReference type="STRING" id="199310.c0215"/>
<dbReference type="GeneID" id="93777247"/>
<dbReference type="KEGG" id="ecc:c0215"/>
<dbReference type="eggNOG" id="COG2825">
    <property type="taxonomic scope" value="Bacteria"/>
</dbReference>
<dbReference type="HOGENOM" id="CLU_101388_2_0_6"/>
<dbReference type="BioCyc" id="ECOL199310:C0215-MONOMER"/>
<dbReference type="Proteomes" id="UP000001410">
    <property type="component" value="Chromosome"/>
</dbReference>
<dbReference type="GO" id="GO:0005829">
    <property type="term" value="C:cytosol"/>
    <property type="evidence" value="ECO:0007669"/>
    <property type="project" value="TreeGrafter"/>
</dbReference>
<dbReference type="GO" id="GO:0042597">
    <property type="term" value="C:periplasmic space"/>
    <property type="evidence" value="ECO:0007669"/>
    <property type="project" value="UniProtKB-SubCell"/>
</dbReference>
<dbReference type="GO" id="GO:0051082">
    <property type="term" value="F:unfolded protein binding"/>
    <property type="evidence" value="ECO:0007669"/>
    <property type="project" value="InterPro"/>
</dbReference>
<dbReference type="GO" id="GO:0061077">
    <property type="term" value="P:chaperone-mediated protein folding"/>
    <property type="evidence" value="ECO:0007669"/>
    <property type="project" value="TreeGrafter"/>
</dbReference>
<dbReference type="GO" id="GO:0050821">
    <property type="term" value="P:protein stabilization"/>
    <property type="evidence" value="ECO:0007669"/>
    <property type="project" value="TreeGrafter"/>
</dbReference>
<dbReference type="FunFam" id="3.30.910.20:FF:000001">
    <property type="entry name" value="Molecular chaperone Skp"/>
    <property type="match status" value="1"/>
</dbReference>
<dbReference type="Gene3D" id="3.30.910.20">
    <property type="entry name" value="Skp domain"/>
    <property type="match status" value="1"/>
</dbReference>
<dbReference type="InterPro" id="IPR005632">
    <property type="entry name" value="Chaperone_Skp"/>
</dbReference>
<dbReference type="InterPro" id="IPR024930">
    <property type="entry name" value="Skp_dom_sf"/>
</dbReference>
<dbReference type="NCBIfam" id="NF008047">
    <property type="entry name" value="PRK10780.1"/>
    <property type="match status" value="1"/>
</dbReference>
<dbReference type="PANTHER" id="PTHR35089">
    <property type="entry name" value="CHAPERONE PROTEIN SKP"/>
    <property type="match status" value="1"/>
</dbReference>
<dbReference type="PANTHER" id="PTHR35089:SF1">
    <property type="entry name" value="CHAPERONE PROTEIN SKP"/>
    <property type="match status" value="1"/>
</dbReference>
<dbReference type="Pfam" id="PF03938">
    <property type="entry name" value="OmpH"/>
    <property type="match status" value="1"/>
</dbReference>
<dbReference type="PIRSF" id="PIRSF002094">
    <property type="entry name" value="OMP26_Skp"/>
    <property type="match status" value="1"/>
</dbReference>
<dbReference type="SMART" id="SM00935">
    <property type="entry name" value="OmpH"/>
    <property type="match status" value="1"/>
</dbReference>
<dbReference type="SUPFAM" id="SSF111384">
    <property type="entry name" value="OmpH-like"/>
    <property type="match status" value="1"/>
</dbReference>
<accession>P0AEU8</accession>
<accession>P11457</accession>
<evidence type="ECO:0000250" key="1"/>
<evidence type="ECO:0000255" key="2"/>
<evidence type="ECO:0000305" key="3"/>
<organism>
    <name type="scientific">Escherichia coli O6:H1 (strain CFT073 / ATCC 700928 / UPEC)</name>
    <dbReference type="NCBI Taxonomy" id="199310"/>
    <lineage>
        <taxon>Bacteria</taxon>
        <taxon>Pseudomonadati</taxon>
        <taxon>Pseudomonadota</taxon>
        <taxon>Gammaproteobacteria</taxon>
        <taxon>Enterobacterales</taxon>
        <taxon>Enterobacteriaceae</taxon>
        <taxon>Escherichia</taxon>
    </lineage>
</organism>
<sequence>MKKWLLAAGLGLALATSAQAADKIAIVNMGSLFQQVAQKTGVSNTLENEFKGRASELQRMETDLQAKMKKLQSMKAGSDRTKLEKDVMAQRQTFAQKAQAFEQDRARRSNEERGKLVTRIQTAVKSVANSQDIDLVVDANAVAYNSSDVKDITADVLKQVK</sequence>
<reference key="1">
    <citation type="journal article" date="2002" name="Proc. Natl. Acad. Sci. U.S.A.">
        <title>Extensive mosaic structure revealed by the complete genome sequence of uropathogenic Escherichia coli.</title>
        <authorList>
            <person name="Welch R.A."/>
            <person name="Burland V."/>
            <person name="Plunkett G. III"/>
            <person name="Redford P."/>
            <person name="Roesch P."/>
            <person name="Rasko D."/>
            <person name="Buckles E.L."/>
            <person name="Liou S.-R."/>
            <person name="Boutin A."/>
            <person name="Hackett J."/>
            <person name="Stroud D."/>
            <person name="Mayhew G.F."/>
            <person name="Rose D.J."/>
            <person name="Zhou S."/>
            <person name="Schwartz D.C."/>
            <person name="Perna N.T."/>
            <person name="Mobley H.L.T."/>
            <person name="Donnenberg M.S."/>
            <person name="Blattner F.R."/>
        </authorList>
    </citation>
    <scope>NUCLEOTIDE SEQUENCE [LARGE SCALE GENOMIC DNA]</scope>
    <source>
        <strain>CFT073 / ATCC 700928 / UPEC</strain>
    </source>
</reference>
<keyword id="KW-0143">Chaperone</keyword>
<keyword id="KW-0574">Periplasm</keyword>
<keyword id="KW-1185">Reference proteome</keyword>
<keyword id="KW-0732">Signal</keyword>
<comment type="function">
    <text evidence="1">Molecular chaperone that interacts specifically with outer membrane proteins, thus maintaining the solubility of early folding intermediates during passage through the periplasm.</text>
</comment>
<comment type="subunit">
    <text evidence="1">Homotrimer.</text>
</comment>
<comment type="subcellular location">
    <subcellularLocation>
        <location evidence="1">Periplasm</location>
    </subcellularLocation>
</comment>
<comment type="similarity">
    <text evidence="3">Belongs to the Skp family.</text>
</comment>
<gene>
    <name type="primary">skp</name>
    <name type="synonym">hlpA</name>
    <name type="ordered locus">c0215</name>
</gene>
<protein>
    <recommendedName>
        <fullName>Chaperone protein Skp</fullName>
    </recommendedName>
</protein>
<proteinExistence type="inferred from homology"/>